<proteinExistence type="evidence at transcript level"/>
<dbReference type="EMBL" id="AY702900">
    <property type="protein sequence ID" value="AAU94453.1"/>
    <property type="molecule type" value="mRNA"/>
</dbReference>
<dbReference type="EMBL" id="CAAE01015040">
    <property type="protein sequence ID" value="CAG11630.1"/>
    <property type="status" value="ALT_SEQ"/>
    <property type="molecule type" value="Genomic_DNA"/>
</dbReference>
<dbReference type="KEGG" id="tng:GSTEN00033649G001"/>
<dbReference type="InParanoid" id="Q49LS9"/>
<dbReference type="OrthoDB" id="6356248at2759"/>
<dbReference type="Proteomes" id="UP000007303">
    <property type="component" value="Unassembled WGS sequence"/>
</dbReference>
<dbReference type="GO" id="GO:0005886">
    <property type="term" value="C:plasma membrane"/>
    <property type="evidence" value="ECO:0007669"/>
    <property type="project" value="UniProtKB-SubCell"/>
</dbReference>
<dbReference type="GO" id="GO:1902742">
    <property type="term" value="P:apoptotic process involved in development"/>
    <property type="evidence" value="ECO:0007669"/>
    <property type="project" value="TreeGrafter"/>
</dbReference>
<dbReference type="GO" id="GO:0043652">
    <property type="term" value="P:engulfment of apoptotic cell"/>
    <property type="evidence" value="ECO:0007669"/>
    <property type="project" value="TreeGrafter"/>
</dbReference>
<dbReference type="GO" id="GO:0070782">
    <property type="term" value="P:phosphatidylserine exposure on apoptotic cell surface"/>
    <property type="evidence" value="ECO:0007669"/>
    <property type="project" value="TreeGrafter"/>
</dbReference>
<dbReference type="InterPro" id="IPR018629">
    <property type="entry name" value="XK-rel"/>
</dbReference>
<dbReference type="InterPro" id="IPR050895">
    <property type="entry name" value="XK-related_scramblase"/>
</dbReference>
<dbReference type="PANTHER" id="PTHR16024">
    <property type="entry name" value="XK-RELATED PROTEIN"/>
    <property type="match status" value="1"/>
</dbReference>
<dbReference type="PANTHER" id="PTHR16024:SF16">
    <property type="entry name" value="XK-RELATED PROTEIN 4"/>
    <property type="match status" value="1"/>
</dbReference>
<dbReference type="Pfam" id="PF09815">
    <property type="entry name" value="XK-related"/>
    <property type="match status" value="2"/>
</dbReference>
<keyword id="KW-1003">Cell membrane</keyword>
<keyword id="KW-0472">Membrane</keyword>
<keyword id="KW-1185">Reference proteome</keyword>
<keyword id="KW-0812">Transmembrane</keyword>
<keyword id="KW-1133">Transmembrane helix</keyword>
<reference key="1">
    <citation type="submission" date="2004-07" db="EMBL/GenBank/DDBJ databases">
        <title>A superfamily of XK-related genes (XRG) widely expressed in vertebrates and invertebrates.</title>
        <authorList>
            <person name="Huang C.-H."/>
            <person name="Chen Y."/>
        </authorList>
    </citation>
    <scope>NUCLEOTIDE SEQUENCE [MRNA]</scope>
</reference>
<reference key="2">
    <citation type="journal article" date="2004" name="Nature">
        <title>Genome duplication in the teleost fish Tetraodon nigroviridis reveals the early vertebrate proto-karyotype.</title>
        <authorList>
            <person name="Jaillon O."/>
            <person name="Aury J.-M."/>
            <person name="Brunet F."/>
            <person name="Petit J.-L."/>
            <person name="Stange-Thomann N."/>
            <person name="Mauceli E."/>
            <person name="Bouneau L."/>
            <person name="Fischer C."/>
            <person name="Ozouf-Costaz C."/>
            <person name="Bernot A."/>
            <person name="Nicaud S."/>
            <person name="Jaffe D."/>
            <person name="Fisher S."/>
            <person name="Lutfalla G."/>
            <person name="Dossat C."/>
            <person name="Segurens B."/>
            <person name="Dasilva C."/>
            <person name="Salanoubat M."/>
            <person name="Levy M."/>
            <person name="Boudet N."/>
            <person name="Castellano S."/>
            <person name="Anthouard V."/>
            <person name="Jubin C."/>
            <person name="Castelli V."/>
            <person name="Katinka M."/>
            <person name="Vacherie B."/>
            <person name="Biemont C."/>
            <person name="Skalli Z."/>
            <person name="Cattolico L."/>
            <person name="Poulain J."/>
            <person name="De Berardinis V."/>
            <person name="Cruaud C."/>
            <person name="Duprat S."/>
            <person name="Brottier P."/>
            <person name="Coutanceau J.-P."/>
            <person name="Gouzy J."/>
            <person name="Parra G."/>
            <person name="Lardier G."/>
            <person name="Chapple C."/>
            <person name="McKernan K.J."/>
            <person name="McEwan P."/>
            <person name="Bosak S."/>
            <person name="Kellis M."/>
            <person name="Volff J.-N."/>
            <person name="Guigo R."/>
            <person name="Zody M.C."/>
            <person name="Mesirov J."/>
            <person name="Lindblad-Toh K."/>
            <person name="Birren B."/>
            <person name="Nusbaum C."/>
            <person name="Kahn D."/>
            <person name="Robinson-Rechavi M."/>
            <person name="Laudet V."/>
            <person name="Schachter V."/>
            <person name="Quetier F."/>
            <person name="Saurin W."/>
            <person name="Scarpelli C."/>
            <person name="Wincker P."/>
            <person name="Lander E.S."/>
            <person name="Weissenbach J."/>
            <person name="Roest Crollius H."/>
        </authorList>
    </citation>
    <scope>NUCLEOTIDE SEQUENCE [LARGE SCALE GENOMIC DNA]</scope>
</reference>
<organism>
    <name type="scientific">Tetraodon nigroviridis</name>
    <name type="common">Spotted green pufferfish</name>
    <name type="synonym">Chelonodon nigroviridis</name>
    <dbReference type="NCBI Taxonomy" id="99883"/>
    <lineage>
        <taxon>Eukaryota</taxon>
        <taxon>Metazoa</taxon>
        <taxon>Chordata</taxon>
        <taxon>Craniata</taxon>
        <taxon>Vertebrata</taxon>
        <taxon>Euteleostomi</taxon>
        <taxon>Actinopterygii</taxon>
        <taxon>Neopterygii</taxon>
        <taxon>Teleostei</taxon>
        <taxon>Neoteleostei</taxon>
        <taxon>Acanthomorphata</taxon>
        <taxon>Eupercaria</taxon>
        <taxon>Tetraodontiformes</taxon>
        <taxon>Tetradontoidea</taxon>
        <taxon>Tetraodontidae</taxon>
        <taxon>Tetraodon</taxon>
    </lineage>
</organism>
<name>XKR4_TETNG</name>
<gene>
    <name evidence="2" type="primary">xkr4</name>
    <name evidence="6" type="synonym">xrg4</name>
    <name evidence="5" type="ORF">GSTENG00033649001</name>
</gene>
<comment type="function">
    <text evidence="1">Phospholipid scramblase that promotes phosphatidylserine exposure on apoptotic cell surface. Phosphatidylserine is a specific marker only present at the surface of apoptotic cells and acts as a specific signal for engulfment.</text>
</comment>
<comment type="catalytic activity">
    <reaction evidence="1">
        <text>a 1,2-diacyl-sn-glycero-3-phospho-L-serine(in) = a 1,2-diacyl-sn-glycero-3-phospho-L-serine(out)</text>
        <dbReference type="Rhea" id="RHEA:38663"/>
        <dbReference type="ChEBI" id="CHEBI:57262"/>
    </reaction>
</comment>
<comment type="subcellular location">
    <subcellularLocation>
        <location evidence="1">Cell membrane</location>
        <topology evidence="3">Multi-pass membrane protein</topology>
    </subcellularLocation>
</comment>
<comment type="similarity">
    <text evidence="7">Belongs to the XK family.</text>
</comment>
<comment type="sequence caution" evidence="7">
    <conflict type="erroneous gene model prediction">
        <sequence resource="EMBL-CDS" id="CAG11630"/>
    </conflict>
</comment>
<protein>
    <recommendedName>
        <fullName evidence="7">XK-related protein 4</fullName>
    </recommendedName>
</protein>
<feature type="chain" id="PRO_0000190781" description="XK-related protein 4">
    <location>
        <begin position="1"/>
        <end position="498"/>
    </location>
</feature>
<feature type="transmembrane region" description="Helical" evidence="3">
    <location>
        <begin position="81"/>
        <end position="101"/>
    </location>
</feature>
<feature type="transmembrane region" description="Helical" evidence="3">
    <location>
        <begin position="111"/>
        <end position="131"/>
    </location>
</feature>
<feature type="transmembrane region" description="Helical" evidence="3">
    <location>
        <begin position="302"/>
        <end position="322"/>
    </location>
</feature>
<feature type="transmembrane region" description="Helical" evidence="3">
    <location>
        <begin position="332"/>
        <end position="352"/>
    </location>
</feature>
<feature type="region of interest" description="Disordered" evidence="4">
    <location>
        <begin position="24"/>
        <end position="46"/>
    </location>
</feature>
<feature type="region of interest" description="Disordered" evidence="4">
    <location>
        <begin position="166"/>
        <end position="203"/>
    </location>
</feature>
<feature type="compositionally biased region" description="Low complexity" evidence="4">
    <location>
        <begin position="183"/>
        <end position="198"/>
    </location>
</feature>
<accession>Q49LS9</accession>
<accession>Q4RJ02</accession>
<sequence>MAAKSDGVLKMKKSDVAFTPLQNSEHSGSVQGLHPGAQPDSAGAGDADFANGESRCCGGGGSHSTCLRLSREQQKYTVWDCLWIVAAVAVYVADVGSDVWLSVDYYLEEDYWWFGLTLFFVVLGSFSVQLFSFRWFVHDFSTEDSAEAAADGSHMDGNKLLSGSASHGDVTAQHHPATPQRQASTASRNTTTNSTASTGLGPRGPKRPAYYTFCVWGSQSVIHILQLGQIWRYIHTIYLGVQSRQSAETERWRYYWRMVYEFADVSMLHLLATFLESAPQLVLQLCIIIQTHKLLAVQGCRLFIYYLLILAENAALSALWYLYRSPLATDAFAVPALCVIFSSFLTGVVFMLMYYAFFHPNGPRFGRSMSGHGLNLDPTAQFSTLPSEVATNSLRSNRGATATLERDAGKYSERDGCMPVFQVRPTVPSTPSSRAPRLEETVIKIDLCRNRYPAWERHVLDRSIRKAILAVDCSLTPPRLQYKDDALVQERLEYETTL</sequence>
<evidence type="ECO:0000250" key="1">
    <source>
        <dbReference type="UniProtKB" id="Q5GH67"/>
    </source>
</evidence>
<evidence type="ECO:0000250" key="2">
    <source>
        <dbReference type="UniProtKB" id="Q5GH76"/>
    </source>
</evidence>
<evidence type="ECO:0000255" key="3"/>
<evidence type="ECO:0000256" key="4">
    <source>
        <dbReference type="SAM" id="MobiDB-lite"/>
    </source>
</evidence>
<evidence type="ECO:0000303" key="5">
    <source>
    </source>
</evidence>
<evidence type="ECO:0000303" key="6">
    <source ref="1"/>
</evidence>
<evidence type="ECO:0000305" key="7"/>